<accession>Q2W5G4</accession>
<comment type="function">
    <text evidence="1">Carrier of the growing fatty acid chain in fatty acid biosynthesis.</text>
</comment>
<comment type="pathway">
    <text evidence="1">Lipid metabolism; fatty acid biosynthesis.</text>
</comment>
<comment type="subcellular location">
    <subcellularLocation>
        <location evidence="1">Cytoplasm</location>
    </subcellularLocation>
</comment>
<comment type="PTM">
    <text evidence="1">4'-phosphopantetheine is transferred from CoA to a specific serine of apo-ACP by AcpS. This modification is essential for activity because fatty acids are bound in thioester linkage to the sulfhydryl of the prosthetic group.</text>
</comment>
<comment type="similarity">
    <text evidence="1">Belongs to the acyl carrier protein (ACP) family.</text>
</comment>
<keyword id="KW-0963">Cytoplasm</keyword>
<keyword id="KW-0275">Fatty acid biosynthesis</keyword>
<keyword id="KW-0276">Fatty acid metabolism</keyword>
<keyword id="KW-0444">Lipid biosynthesis</keyword>
<keyword id="KW-0443">Lipid metabolism</keyword>
<keyword id="KW-0596">Phosphopantetheine</keyword>
<keyword id="KW-0597">Phosphoprotein</keyword>
<name>ACP_PARM1</name>
<feature type="chain" id="PRO_1000066634" description="Acyl carrier protein">
    <location>
        <begin position="1"/>
        <end position="77"/>
    </location>
</feature>
<feature type="domain" description="Carrier" evidence="2">
    <location>
        <begin position="2"/>
        <end position="77"/>
    </location>
</feature>
<feature type="modified residue" description="O-(pantetheine 4'-phosphoryl)serine" evidence="2">
    <location>
        <position position="37"/>
    </location>
</feature>
<reference key="1">
    <citation type="journal article" date="2005" name="DNA Res.">
        <title>Complete genome sequence of the facultative anaerobic magnetotactic bacterium Magnetospirillum sp. strain AMB-1.</title>
        <authorList>
            <person name="Matsunaga T."/>
            <person name="Okamura Y."/>
            <person name="Fukuda Y."/>
            <person name="Wahyudi A.T."/>
            <person name="Murase Y."/>
            <person name="Takeyama H."/>
        </authorList>
    </citation>
    <scope>NUCLEOTIDE SEQUENCE [LARGE SCALE GENOMIC DNA]</scope>
    <source>
        <strain>ATCC 700264 / AMB-1</strain>
    </source>
</reference>
<evidence type="ECO:0000255" key="1">
    <source>
        <dbReference type="HAMAP-Rule" id="MF_01217"/>
    </source>
</evidence>
<evidence type="ECO:0000255" key="2">
    <source>
        <dbReference type="PROSITE-ProRule" id="PRU00258"/>
    </source>
</evidence>
<protein>
    <recommendedName>
        <fullName evidence="1">Acyl carrier protein</fullName>
        <shortName evidence="1">ACP</shortName>
    </recommendedName>
</protein>
<proteinExistence type="inferred from homology"/>
<organism>
    <name type="scientific">Paramagnetospirillum magneticum (strain ATCC 700264 / AMB-1)</name>
    <name type="common">Magnetospirillum magneticum</name>
    <dbReference type="NCBI Taxonomy" id="342108"/>
    <lineage>
        <taxon>Bacteria</taxon>
        <taxon>Pseudomonadati</taxon>
        <taxon>Pseudomonadota</taxon>
        <taxon>Alphaproteobacteria</taxon>
        <taxon>Rhodospirillales</taxon>
        <taxon>Magnetospirillaceae</taxon>
        <taxon>Paramagnetospirillum</taxon>
    </lineage>
</organism>
<sequence length="77" mass="8414">MSDVAERVKKIVVEHLGVEEAKVTENASFIDDLGADSLDTVELVMAFEEEFSVEIPDDAAEKILTVKDAIDFITANS</sequence>
<gene>
    <name evidence="1" type="primary">acpP</name>
    <name type="ordered locus">amb2107</name>
</gene>
<dbReference type="EMBL" id="AP007255">
    <property type="protein sequence ID" value="BAE50911.1"/>
    <property type="molecule type" value="Genomic_DNA"/>
</dbReference>
<dbReference type="RefSeq" id="WP_008615764.1">
    <property type="nucleotide sequence ID" value="NC_007626.1"/>
</dbReference>
<dbReference type="SMR" id="Q2W5G4"/>
<dbReference type="STRING" id="342108.amb2107"/>
<dbReference type="KEGG" id="mag:amb2107"/>
<dbReference type="HOGENOM" id="CLU_108696_5_1_5"/>
<dbReference type="OrthoDB" id="9804551at2"/>
<dbReference type="UniPathway" id="UPA00094"/>
<dbReference type="Proteomes" id="UP000007058">
    <property type="component" value="Chromosome"/>
</dbReference>
<dbReference type="GO" id="GO:0005829">
    <property type="term" value="C:cytosol"/>
    <property type="evidence" value="ECO:0007669"/>
    <property type="project" value="TreeGrafter"/>
</dbReference>
<dbReference type="GO" id="GO:0016020">
    <property type="term" value="C:membrane"/>
    <property type="evidence" value="ECO:0007669"/>
    <property type="project" value="GOC"/>
</dbReference>
<dbReference type="GO" id="GO:0000035">
    <property type="term" value="F:acyl binding"/>
    <property type="evidence" value="ECO:0007669"/>
    <property type="project" value="TreeGrafter"/>
</dbReference>
<dbReference type="GO" id="GO:0000036">
    <property type="term" value="F:acyl carrier activity"/>
    <property type="evidence" value="ECO:0007669"/>
    <property type="project" value="UniProtKB-UniRule"/>
</dbReference>
<dbReference type="GO" id="GO:0009245">
    <property type="term" value="P:lipid A biosynthetic process"/>
    <property type="evidence" value="ECO:0007669"/>
    <property type="project" value="TreeGrafter"/>
</dbReference>
<dbReference type="FunFam" id="1.10.1200.10:FF:000001">
    <property type="entry name" value="Acyl carrier protein"/>
    <property type="match status" value="1"/>
</dbReference>
<dbReference type="Gene3D" id="1.10.1200.10">
    <property type="entry name" value="ACP-like"/>
    <property type="match status" value="1"/>
</dbReference>
<dbReference type="HAMAP" id="MF_01217">
    <property type="entry name" value="Acyl_carrier"/>
    <property type="match status" value="1"/>
</dbReference>
<dbReference type="InterPro" id="IPR003231">
    <property type="entry name" value="ACP"/>
</dbReference>
<dbReference type="InterPro" id="IPR036736">
    <property type="entry name" value="ACP-like_sf"/>
</dbReference>
<dbReference type="InterPro" id="IPR009081">
    <property type="entry name" value="PP-bd_ACP"/>
</dbReference>
<dbReference type="InterPro" id="IPR006162">
    <property type="entry name" value="Ppantetheine_attach_site"/>
</dbReference>
<dbReference type="NCBIfam" id="TIGR00517">
    <property type="entry name" value="acyl_carrier"/>
    <property type="match status" value="1"/>
</dbReference>
<dbReference type="NCBIfam" id="NF002148">
    <property type="entry name" value="PRK00982.1-2"/>
    <property type="match status" value="1"/>
</dbReference>
<dbReference type="NCBIfam" id="NF002149">
    <property type="entry name" value="PRK00982.1-3"/>
    <property type="match status" value="1"/>
</dbReference>
<dbReference type="NCBIfam" id="NF002150">
    <property type="entry name" value="PRK00982.1-4"/>
    <property type="match status" value="1"/>
</dbReference>
<dbReference type="NCBIfam" id="NF002151">
    <property type="entry name" value="PRK00982.1-5"/>
    <property type="match status" value="1"/>
</dbReference>
<dbReference type="PANTHER" id="PTHR20863">
    <property type="entry name" value="ACYL CARRIER PROTEIN"/>
    <property type="match status" value="1"/>
</dbReference>
<dbReference type="PANTHER" id="PTHR20863:SF76">
    <property type="entry name" value="CARRIER DOMAIN-CONTAINING PROTEIN"/>
    <property type="match status" value="1"/>
</dbReference>
<dbReference type="Pfam" id="PF00550">
    <property type="entry name" value="PP-binding"/>
    <property type="match status" value="1"/>
</dbReference>
<dbReference type="SUPFAM" id="SSF47336">
    <property type="entry name" value="ACP-like"/>
    <property type="match status" value="1"/>
</dbReference>
<dbReference type="PROSITE" id="PS50075">
    <property type="entry name" value="CARRIER"/>
    <property type="match status" value="1"/>
</dbReference>
<dbReference type="PROSITE" id="PS00012">
    <property type="entry name" value="PHOSPHOPANTETHEINE"/>
    <property type="match status" value="1"/>
</dbReference>